<comment type="function">
    <text evidence="1">Catalyzes the conversion of 1-hydroxy-2-methyl-2-(E)-butenyl 4-diphosphate (HMBPP) into a mixture of isopentenyl diphosphate (IPP) and dimethylallyl diphosphate (DMAPP). Acts in the terminal step of the DOXP/MEP pathway for isoprenoid precursor biosynthesis.</text>
</comment>
<comment type="catalytic activity">
    <reaction evidence="1">
        <text>isopentenyl diphosphate + 2 oxidized [2Fe-2S]-[ferredoxin] + H2O = (2E)-4-hydroxy-3-methylbut-2-enyl diphosphate + 2 reduced [2Fe-2S]-[ferredoxin] + 2 H(+)</text>
        <dbReference type="Rhea" id="RHEA:24488"/>
        <dbReference type="Rhea" id="RHEA-COMP:10000"/>
        <dbReference type="Rhea" id="RHEA-COMP:10001"/>
        <dbReference type="ChEBI" id="CHEBI:15377"/>
        <dbReference type="ChEBI" id="CHEBI:15378"/>
        <dbReference type="ChEBI" id="CHEBI:33737"/>
        <dbReference type="ChEBI" id="CHEBI:33738"/>
        <dbReference type="ChEBI" id="CHEBI:128753"/>
        <dbReference type="ChEBI" id="CHEBI:128769"/>
        <dbReference type="EC" id="1.17.7.4"/>
    </reaction>
</comment>
<comment type="catalytic activity">
    <reaction evidence="1">
        <text>dimethylallyl diphosphate + 2 oxidized [2Fe-2S]-[ferredoxin] + H2O = (2E)-4-hydroxy-3-methylbut-2-enyl diphosphate + 2 reduced [2Fe-2S]-[ferredoxin] + 2 H(+)</text>
        <dbReference type="Rhea" id="RHEA:24825"/>
        <dbReference type="Rhea" id="RHEA-COMP:10000"/>
        <dbReference type="Rhea" id="RHEA-COMP:10001"/>
        <dbReference type="ChEBI" id="CHEBI:15377"/>
        <dbReference type="ChEBI" id="CHEBI:15378"/>
        <dbReference type="ChEBI" id="CHEBI:33737"/>
        <dbReference type="ChEBI" id="CHEBI:33738"/>
        <dbReference type="ChEBI" id="CHEBI:57623"/>
        <dbReference type="ChEBI" id="CHEBI:128753"/>
        <dbReference type="EC" id="1.17.7.4"/>
    </reaction>
</comment>
<comment type="cofactor">
    <cofactor evidence="1">
        <name>[4Fe-4S] cluster</name>
        <dbReference type="ChEBI" id="CHEBI:49883"/>
    </cofactor>
    <text evidence="1">Binds 1 [4Fe-4S] cluster per subunit.</text>
</comment>
<comment type="pathway">
    <text evidence="1">Isoprenoid biosynthesis; dimethylallyl diphosphate biosynthesis; dimethylallyl diphosphate from (2E)-4-hydroxy-3-methylbutenyl diphosphate: step 1/1.</text>
</comment>
<comment type="pathway">
    <text evidence="1">Isoprenoid biosynthesis; isopentenyl diphosphate biosynthesis via DXP pathway; isopentenyl diphosphate from 1-deoxy-D-xylulose 5-phosphate: step 6/6.</text>
</comment>
<comment type="similarity">
    <text evidence="1">Belongs to the IspH family.</text>
</comment>
<dbReference type="EC" id="1.17.7.4" evidence="1"/>
<dbReference type="EMBL" id="CP000487">
    <property type="protein sequence ID" value="ABK82316.1"/>
    <property type="molecule type" value="Genomic_DNA"/>
</dbReference>
<dbReference type="RefSeq" id="WP_002850022.1">
    <property type="nucleotide sequence ID" value="NC_008599.1"/>
</dbReference>
<dbReference type="SMR" id="A0RQC4"/>
<dbReference type="KEGG" id="cff:CFF8240_1251"/>
<dbReference type="eggNOG" id="COG0761">
    <property type="taxonomic scope" value="Bacteria"/>
</dbReference>
<dbReference type="HOGENOM" id="CLU_027486_0_1_7"/>
<dbReference type="UniPathway" id="UPA00056">
    <property type="reaction ID" value="UER00097"/>
</dbReference>
<dbReference type="UniPathway" id="UPA00059">
    <property type="reaction ID" value="UER00105"/>
</dbReference>
<dbReference type="Proteomes" id="UP000000760">
    <property type="component" value="Chromosome"/>
</dbReference>
<dbReference type="GO" id="GO:0051539">
    <property type="term" value="F:4 iron, 4 sulfur cluster binding"/>
    <property type="evidence" value="ECO:0007669"/>
    <property type="project" value="UniProtKB-UniRule"/>
</dbReference>
<dbReference type="GO" id="GO:0051745">
    <property type="term" value="F:4-hydroxy-3-methylbut-2-enyl diphosphate reductase activity"/>
    <property type="evidence" value="ECO:0007669"/>
    <property type="project" value="UniProtKB-UniRule"/>
</dbReference>
<dbReference type="GO" id="GO:0046872">
    <property type="term" value="F:metal ion binding"/>
    <property type="evidence" value="ECO:0007669"/>
    <property type="project" value="UniProtKB-KW"/>
</dbReference>
<dbReference type="GO" id="GO:0050992">
    <property type="term" value="P:dimethylallyl diphosphate biosynthetic process"/>
    <property type="evidence" value="ECO:0007669"/>
    <property type="project" value="UniProtKB-UniRule"/>
</dbReference>
<dbReference type="GO" id="GO:0019288">
    <property type="term" value="P:isopentenyl diphosphate biosynthetic process, methylerythritol 4-phosphate pathway"/>
    <property type="evidence" value="ECO:0007669"/>
    <property type="project" value="UniProtKB-UniRule"/>
</dbReference>
<dbReference type="GO" id="GO:0016114">
    <property type="term" value="P:terpenoid biosynthetic process"/>
    <property type="evidence" value="ECO:0007669"/>
    <property type="project" value="UniProtKB-UniRule"/>
</dbReference>
<dbReference type="CDD" id="cd13944">
    <property type="entry name" value="lytB_ispH"/>
    <property type="match status" value="1"/>
</dbReference>
<dbReference type="Gene3D" id="3.40.50.11270">
    <property type="match status" value="1"/>
</dbReference>
<dbReference type="Gene3D" id="3.40.1010.20">
    <property type="entry name" value="4-hydroxy-3-methylbut-2-enyl diphosphate reductase, catalytic domain"/>
    <property type="match status" value="2"/>
</dbReference>
<dbReference type="HAMAP" id="MF_00191">
    <property type="entry name" value="IspH"/>
    <property type="match status" value="1"/>
</dbReference>
<dbReference type="InterPro" id="IPR003451">
    <property type="entry name" value="LytB/IspH"/>
</dbReference>
<dbReference type="NCBIfam" id="TIGR00216">
    <property type="entry name" value="ispH_lytB"/>
    <property type="match status" value="1"/>
</dbReference>
<dbReference type="NCBIfam" id="NF002187">
    <property type="entry name" value="PRK01045.1-1"/>
    <property type="match status" value="1"/>
</dbReference>
<dbReference type="PANTHER" id="PTHR30426">
    <property type="entry name" value="4-HYDROXY-3-METHYLBUT-2-ENYL DIPHOSPHATE REDUCTASE"/>
    <property type="match status" value="1"/>
</dbReference>
<dbReference type="PANTHER" id="PTHR30426:SF0">
    <property type="entry name" value="4-HYDROXY-3-METHYLBUT-2-ENYL DIPHOSPHATE REDUCTASE"/>
    <property type="match status" value="1"/>
</dbReference>
<dbReference type="Pfam" id="PF02401">
    <property type="entry name" value="LYTB"/>
    <property type="match status" value="1"/>
</dbReference>
<organism>
    <name type="scientific">Campylobacter fetus subsp. fetus (strain 82-40)</name>
    <dbReference type="NCBI Taxonomy" id="360106"/>
    <lineage>
        <taxon>Bacteria</taxon>
        <taxon>Pseudomonadati</taxon>
        <taxon>Campylobacterota</taxon>
        <taxon>Epsilonproteobacteria</taxon>
        <taxon>Campylobacterales</taxon>
        <taxon>Campylobacteraceae</taxon>
        <taxon>Campylobacter</taxon>
    </lineage>
</organism>
<gene>
    <name evidence="1" type="primary">ispH</name>
    <name type="ordered locus">CFF8240_1251</name>
</gene>
<protein>
    <recommendedName>
        <fullName evidence="1">4-hydroxy-3-methylbut-2-enyl diphosphate reductase</fullName>
        <shortName evidence="1">HMBPP reductase</shortName>
        <ecNumber evidence="1">1.17.7.4</ecNumber>
    </recommendedName>
</protein>
<feature type="chain" id="PRO_1000021095" description="4-hydroxy-3-methylbut-2-enyl diphosphate reductase">
    <location>
        <begin position="1"/>
        <end position="279"/>
    </location>
</feature>
<feature type="active site" description="Proton donor" evidence="1">
    <location>
        <position position="122"/>
    </location>
</feature>
<feature type="binding site" evidence="1">
    <location>
        <position position="12"/>
    </location>
    <ligand>
        <name>[4Fe-4S] cluster</name>
        <dbReference type="ChEBI" id="CHEBI:49883"/>
    </ligand>
</feature>
<feature type="binding site" evidence="1">
    <location>
        <position position="36"/>
    </location>
    <ligand>
        <name>(2E)-4-hydroxy-3-methylbut-2-enyl diphosphate</name>
        <dbReference type="ChEBI" id="CHEBI:128753"/>
    </ligand>
</feature>
<feature type="binding site" evidence="1">
    <location>
        <position position="36"/>
    </location>
    <ligand>
        <name>dimethylallyl diphosphate</name>
        <dbReference type="ChEBI" id="CHEBI:57623"/>
    </ligand>
</feature>
<feature type="binding site" evidence="1">
    <location>
        <position position="36"/>
    </location>
    <ligand>
        <name>isopentenyl diphosphate</name>
        <dbReference type="ChEBI" id="CHEBI:128769"/>
    </ligand>
</feature>
<feature type="binding site" evidence="1">
    <location>
        <position position="70"/>
    </location>
    <ligand>
        <name>(2E)-4-hydroxy-3-methylbut-2-enyl diphosphate</name>
        <dbReference type="ChEBI" id="CHEBI:128753"/>
    </ligand>
</feature>
<feature type="binding site" evidence="1">
    <location>
        <position position="70"/>
    </location>
    <ligand>
        <name>dimethylallyl diphosphate</name>
        <dbReference type="ChEBI" id="CHEBI:57623"/>
    </ligand>
</feature>
<feature type="binding site" evidence="1">
    <location>
        <position position="70"/>
    </location>
    <ligand>
        <name>isopentenyl diphosphate</name>
        <dbReference type="ChEBI" id="CHEBI:128769"/>
    </ligand>
</feature>
<feature type="binding site" evidence="1">
    <location>
        <position position="92"/>
    </location>
    <ligand>
        <name>[4Fe-4S] cluster</name>
        <dbReference type="ChEBI" id="CHEBI:49883"/>
    </ligand>
</feature>
<feature type="binding site" evidence="1">
    <location>
        <position position="120"/>
    </location>
    <ligand>
        <name>(2E)-4-hydroxy-3-methylbut-2-enyl diphosphate</name>
        <dbReference type="ChEBI" id="CHEBI:128753"/>
    </ligand>
</feature>
<feature type="binding site" evidence="1">
    <location>
        <position position="120"/>
    </location>
    <ligand>
        <name>dimethylallyl diphosphate</name>
        <dbReference type="ChEBI" id="CHEBI:57623"/>
    </ligand>
</feature>
<feature type="binding site" evidence="1">
    <location>
        <position position="120"/>
    </location>
    <ligand>
        <name>isopentenyl diphosphate</name>
        <dbReference type="ChEBI" id="CHEBI:128769"/>
    </ligand>
</feature>
<feature type="binding site" evidence="1">
    <location>
        <position position="158"/>
    </location>
    <ligand>
        <name>(2E)-4-hydroxy-3-methylbut-2-enyl diphosphate</name>
        <dbReference type="ChEBI" id="CHEBI:128753"/>
    </ligand>
</feature>
<feature type="binding site" evidence="1">
    <location>
        <position position="186"/>
    </location>
    <ligand>
        <name>[4Fe-4S] cluster</name>
        <dbReference type="ChEBI" id="CHEBI:49883"/>
    </ligand>
</feature>
<feature type="binding site" evidence="1">
    <location>
        <position position="214"/>
    </location>
    <ligand>
        <name>(2E)-4-hydroxy-3-methylbut-2-enyl diphosphate</name>
        <dbReference type="ChEBI" id="CHEBI:128753"/>
    </ligand>
</feature>
<feature type="binding site" evidence="1">
    <location>
        <position position="214"/>
    </location>
    <ligand>
        <name>dimethylallyl diphosphate</name>
        <dbReference type="ChEBI" id="CHEBI:57623"/>
    </ligand>
</feature>
<feature type="binding site" evidence="1">
    <location>
        <position position="214"/>
    </location>
    <ligand>
        <name>isopentenyl diphosphate</name>
        <dbReference type="ChEBI" id="CHEBI:128769"/>
    </ligand>
</feature>
<feature type="binding site" evidence="1">
    <location>
        <position position="215"/>
    </location>
    <ligand>
        <name>(2E)-4-hydroxy-3-methylbut-2-enyl diphosphate</name>
        <dbReference type="ChEBI" id="CHEBI:128753"/>
    </ligand>
</feature>
<feature type="binding site" evidence="1">
    <location>
        <position position="215"/>
    </location>
    <ligand>
        <name>dimethylallyl diphosphate</name>
        <dbReference type="ChEBI" id="CHEBI:57623"/>
    </ligand>
</feature>
<feature type="binding site" evidence="1">
    <location>
        <position position="215"/>
    </location>
    <ligand>
        <name>isopentenyl diphosphate</name>
        <dbReference type="ChEBI" id="CHEBI:128769"/>
    </ligand>
</feature>
<feature type="binding site" evidence="1">
    <location>
        <position position="216"/>
    </location>
    <ligand>
        <name>(2E)-4-hydroxy-3-methylbut-2-enyl diphosphate</name>
        <dbReference type="ChEBI" id="CHEBI:128753"/>
    </ligand>
</feature>
<feature type="binding site" evidence="1">
    <location>
        <position position="216"/>
    </location>
    <ligand>
        <name>dimethylallyl diphosphate</name>
        <dbReference type="ChEBI" id="CHEBI:57623"/>
    </ligand>
</feature>
<feature type="binding site" evidence="1">
    <location>
        <position position="216"/>
    </location>
    <ligand>
        <name>isopentenyl diphosphate</name>
        <dbReference type="ChEBI" id="CHEBI:128769"/>
    </ligand>
</feature>
<feature type="binding site" evidence="1">
    <location>
        <position position="258"/>
    </location>
    <ligand>
        <name>(2E)-4-hydroxy-3-methylbut-2-enyl diphosphate</name>
        <dbReference type="ChEBI" id="CHEBI:128753"/>
    </ligand>
</feature>
<feature type="binding site" evidence="1">
    <location>
        <position position="258"/>
    </location>
    <ligand>
        <name>dimethylallyl diphosphate</name>
        <dbReference type="ChEBI" id="CHEBI:57623"/>
    </ligand>
</feature>
<feature type="binding site" evidence="1">
    <location>
        <position position="258"/>
    </location>
    <ligand>
        <name>isopentenyl diphosphate</name>
        <dbReference type="ChEBI" id="CHEBI:128769"/>
    </ligand>
</feature>
<sequence length="279" mass="31466">MKIELAKSYGFCFGVKRAIKIAENSKNASTIGELIHNSLEIDRLKNNFNVKTLKDISELKNEKKAIIRTHGITKEGLANLKSRDVEIIDATCPFVTKPQQIVEKMSSEGYEIVFFGDINHPEVKGVMSYSSKNVYVILDESELETVKLPSKIAVVSQTTKKIEKFTKIVSYLMQRVKEVRVFNTICNATLENQEAVRELSSRADVMVIIGGKNSSNTKQLYLISKNLCPDSYLIESENELELKWFQNKKLCGISAGASTPEWVIQNVINKLENLTHKDS</sequence>
<keyword id="KW-0004">4Fe-4S</keyword>
<keyword id="KW-0408">Iron</keyword>
<keyword id="KW-0411">Iron-sulfur</keyword>
<keyword id="KW-0414">Isoprene biosynthesis</keyword>
<keyword id="KW-0479">Metal-binding</keyword>
<keyword id="KW-0560">Oxidoreductase</keyword>
<proteinExistence type="inferred from homology"/>
<reference key="1">
    <citation type="submission" date="2006-11" db="EMBL/GenBank/DDBJ databases">
        <title>Sequence of Campylobacter fetus subsp. fetus 82-40.</title>
        <authorList>
            <person name="Fouts D.E."/>
            <person name="Nelson K.E."/>
        </authorList>
    </citation>
    <scope>NUCLEOTIDE SEQUENCE [LARGE SCALE GENOMIC DNA]</scope>
    <source>
        <strain>82-40</strain>
    </source>
</reference>
<name>ISPH_CAMFF</name>
<evidence type="ECO:0000255" key="1">
    <source>
        <dbReference type="HAMAP-Rule" id="MF_00191"/>
    </source>
</evidence>
<accession>A0RQC4</accession>